<proteinExistence type="inferred from homology"/>
<comment type="function">
    <text>Preferentially converts 3,5-dichlorocatechol as opposed to other chlorinated catechols. Retains diminished activity toward non-chlorinated substrates.</text>
</comment>
<comment type="catalytic activity">
    <reaction>
        <text>3,5-dichlorocatechol + O2 = (2E,4E)-2,4-dichloromuconate + 2 H(+)</text>
        <dbReference type="Rhea" id="RHEA:48572"/>
        <dbReference type="ChEBI" id="CHEBI:11438"/>
        <dbReference type="ChEBI" id="CHEBI:15378"/>
        <dbReference type="ChEBI" id="CHEBI:15379"/>
        <dbReference type="ChEBI" id="CHEBI:15788"/>
    </reaction>
</comment>
<comment type="cofactor">
    <cofactor>
        <name>Fe(3+)</name>
        <dbReference type="ChEBI" id="CHEBI:29034"/>
    </cofactor>
    <text>Binds 1 Fe(3+) ion per subunit.</text>
</comment>
<comment type="pathway">
    <text>Aromatic compound metabolism; 3-chlorocatechol degradation.</text>
</comment>
<comment type="similarity">
    <text evidence="2">Belongs to the intradiol ring-cleavage dioxygenase family.</text>
</comment>
<geneLocation type="plasmid">
    <name>pMAB1</name>
</geneLocation>
<sequence>MNKRVKDVVDAIVAAVQRVLDQKEVTEAEYRTAVHYLMQVAEQRETALLCDVFFNSTVAATKARISEGSTPAIEGPYYRDDAPLVDDRLKTYDTDDHKPLLIQGTVKAVDGSVVEDVTIDVWHSTPDGKYSGFHDDIPTDFYRGKLRVGTDGSFRVRTTMPVPYQIPDQGPTGALLETMGGHSWRPAHVHFKVKAPGYETLTTQYYFEGGDWITDDCCNGVQSSLITPDIVEEGVRLMNINFVIEPARAQAGANP</sequence>
<feature type="chain" id="PRO_0000085091" description="Chlorocatechol 1,2-dioxygenase">
    <location>
        <begin position="1"/>
        <end position="255"/>
    </location>
</feature>
<feature type="binding site" evidence="1">
    <location>
        <position position="130"/>
    </location>
    <ligand>
        <name>Fe cation</name>
        <dbReference type="ChEBI" id="CHEBI:24875"/>
    </ligand>
</feature>
<feature type="binding site" evidence="1">
    <location>
        <position position="164"/>
    </location>
    <ligand>
        <name>Fe cation</name>
        <dbReference type="ChEBI" id="CHEBI:24875"/>
    </ligand>
</feature>
<feature type="binding site" evidence="1">
    <location>
        <position position="188"/>
    </location>
    <ligand>
        <name>Fe cation</name>
        <dbReference type="ChEBI" id="CHEBI:24875"/>
    </ligand>
</feature>
<feature type="binding site" evidence="1">
    <location>
        <position position="190"/>
    </location>
    <ligand>
        <name>Fe cation</name>
        <dbReference type="ChEBI" id="CHEBI:24875"/>
    </ligand>
</feature>
<reference key="1">
    <citation type="journal article" date="1994" name="Appl. Environ. Microbiol.">
        <title>Identification and characterization of a new plasmid carrying genes for degradation of 2,4-dichlorophenoxyacetate from Pseudomonas cepacia CSV90.</title>
        <authorList>
            <person name="Bhat M.A."/>
            <person name="Tsuda M."/>
            <person name="Nozaki M."/>
            <person name="Horiike K."/>
            <person name="Vaidyanathan C.S."/>
            <person name="Nakazawa T."/>
        </authorList>
    </citation>
    <scope>NUCLEOTIDE SEQUENCE [GENOMIC DNA]</scope>
    <source>
        <strain>CSV90</strain>
    </source>
</reference>
<evidence type="ECO:0000250" key="1"/>
<evidence type="ECO:0000305" key="2"/>
<name>TFDC_BURCE</name>
<dbReference type="EC" id="1.13.11.-"/>
<dbReference type="EMBL" id="D16356">
    <property type="protein sequence ID" value="BAA03859.1"/>
    <property type="molecule type" value="Genomic_DNA"/>
</dbReference>
<dbReference type="SMR" id="P0A397"/>
<dbReference type="UniPathway" id="UPA00083"/>
<dbReference type="GO" id="GO:0018576">
    <property type="term" value="F:catechol 1,2-dioxygenase activity"/>
    <property type="evidence" value="ECO:0007669"/>
    <property type="project" value="InterPro"/>
</dbReference>
<dbReference type="GO" id="GO:0008199">
    <property type="term" value="F:ferric iron binding"/>
    <property type="evidence" value="ECO:0007669"/>
    <property type="project" value="InterPro"/>
</dbReference>
<dbReference type="GO" id="GO:0009056">
    <property type="term" value="P:catabolic process"/>
    <property type="evidence" value="ECO:0007669"/>
    <property type="project" value="UniProtKB-KW"/>
</dbReference>
<dbReference type="GO" id="GO:0009712">
    <property type="term" value="P:catechol-containing compound metabolic process"/>
    <property type="evidence" value="ECO:0007669"/>
    <property type="project" value="InterPro"/>
</dbReference>
<dbReference type="CDD" id="cd03462">
    <property type="entry name" value="1_2-CCD"/>
    <property type="match status" value="1"/>
</dbReference>
<dbReference type="Gene3D" id="2.60.130.10">
    <property type="entry name" value="Aromatic compound dioxygenase"/>
    <property type="match status" value="1"/>
</dbReference>
<dbReference type="InterPro" id="IPR007535">
    <property type="entry name" value="Catechol_dOase_N"/>
</dbReference>
<dbReference type="InterPro" id="IPR012817">
    <property type="entry name" value="Chlorcchol_dOase"/>
</dbReference>
<dbReference type="InterPro" id="IPR000627">
    <property type="entry name" value="Intradiol_dOase_C"/>
</dbReference>
<dbReference type="InterPro" id="IPR015889">
    <property type="entry name" value="Intradiol_dOase_core"/>
</dbReference>
<dbReference type="InterPro" id="IPR050770">
    <property type="entry name" value="Intradiol_RC_Dioxygenase"/>
</dbReference>
<dbReference type="NCBIfam" id="TIGR02465">
    <property type="entry name" value="chlorocat_1_2"/>
    <property type="match status" value="1"/>
</dbReference>
<dbReference type="PANTHER" id="PTHR33711">
    <property type="entry name" value="DIOXYGENASE, PUTATIVE (AFU_ORTHOLOGUE AFUA_2G02910)-RELATED"/>
    <property type="match status" value="1"/>
</dbReference>
<dbReference type="PANTHER" id="PTHR33711:SF7">
    <property type="entry name" value="INTRADIOL RING-CLEAVAGE DIOXYGENASES DOMAIN-CONTAINING PROTEIN-RELATED"/>
    <property type="match status" value="1"/>
</dbReference>
<dbReference type="Pfam" id="PF00775">
    <property type="entry name" value="Dioxygenase_C"/>
    <property type="match status" value="1"/>
</dbReference>
<dbReference type="Pfam" id="PF04444">
    <property type="entry name" value="Dioxygenase_N"/>
    <property type="match status" value="1"/>
</dbReference>
<dbReference type="SUPFAM" id="SSF49482">
    <property type="entry name" value="Aromatic compound dioxygenase"/>
    <property type="match status" value="1"/>
</dbReference>
<dbReference type="PROSITE" id="PS00083">
    <property type="entry name" value="INTRADIOL_DIOXYGENAS"/>
    <property type="match status" value="1"/>
</dbReference>
<accession>P0A397</accession>
<accession>P05403</accession>
<accession>P71131</accession>
<keyword id="KW-0058">Aromatic hydrocarbons catabolism</keyword>
<keyword id="KW-0223">Dioxygenase</keyword>
<keyword id="KW-0408">Iron</keyword>
<keyword id="KW-0479">Metal-binding</keyword>
<keyword id="KW-0560">Oxidoreductase</keyword>
<keyword id="KW-0614">Plasmid</keyword>
<gene>
    <name type="primary">tfdC</name>
    <name type="synonym">tfdCI</name>
</gene>
<organism>
    <name type="scientific">Burkholderia cepacia</name>
    <name type="common">Pseudomonas cepacia</name>
    <dbReference type="NCBI Taxonomy" id="292"/>
    <lineage>
        <taxon>Bacteria</taxon>
        <taxon>Pseudomonadati</taxon>
        <taxon>Pseudomonadota</taxon>
        <taxon>Betaproteobacteria</taxon>
        <taxon>Burkholderiales</taxon>
        <taxon>Burkholderiaceae</taxon>
        <taxon>Burkholderia</taxon>
        <taxon>Burkholderia cepacia complex</taxon>
    </lineage>
</organism>
<protein>
    <recommendedName>
        <fullName>Chlorocatechol 1,2-dioxygenase</fullName>
        <ecNumber>1.13.11.-</ecNumber>
    </recommendedName>
</protein>